<evidence type="ECO:0000255" key="1">
    <source>
        <dbReference type="HAMAP-Rule" id="MF_01218"/>
    </source>
</evidence>
<organism>
    <name type="scientific">Salmonella paratyphi C (strain RKS4594)</name>
    <dbReference type="NCBI Taxonomy" id="476213"/>
    <lineage>
        <taxon>Bacteria</taxon>
        <taxon>Pseudomonadati</taxon>
        <taxon>Pseudomonadota</taxon>
        <taxon>Gammaproteobacteria</taxon>
        <taxon>Enterobacterales</taxon>
        <taxon>Enterobacteriaceae</taxon>
        <taxon>Salmonella</taxon>
    </lineage>
</organism>
<protein>
    <recommendedName>
        <fullName evidence="1">Uracil phosphoribosyltransferase</fullName>
        <ecNumber evidence="1">2.4.2.9</ecNumber>
    </recommendedName>
    <alternativeName>
        <fullName evidence="1">UMP pyrophosphorylase</fullName>
    </alternativeName>
    <alternativeName>
        <fullName evidence="1">UPRTase</fullName>
    </alternativeName>
</protein>
<gene>
    <name evidence="1" type="primary">upp</name>
    <name type="ordered locus">SPC_1159</name>
</gene>
<dbReference type="EC" id="2.4.2.9" evidence="1"/>
<dbReference type="EMBL" id="CP000857">
    <property type="protein sequence ID" value="ACN45325.1"/>
    <property type="molecule type" value="Genomic_DNA"/>
</dbReference>
<dbReference type="RefSeq" id="WP_000706208.1">
    <property type="nucleotide sequence ID" value="NC_012125.1"/>
</dbReference>
<dbReference type="SMR" id="C0PYQ8"/>
<dbReference type="KEGG" id="sei:SPC_1159"/>
<dbReference type="HOGENOM" id="CLU_067096_2_2_6"/>
<dbReference type="UniPathway" id="UPA00574">
    <property type="reaction ID" value="UER00636"/>
</dbReference>
<dbReference type="Proteomes" id="UP000001599">
    <property type="component" value="Chromosome"/>
</dbReference>
<dbReference type="GO" id="GO:0005525">
    <property type="term" value="F:GTP binding"/>
    <property type="evidence" value="ECO:0007669"/>
    <property type="project" value="UniProtKB-KW"/>
</dbReference>
<dbReference type="GO" id="GO:0000287">
    <property type="term" value="F:magnesium ion binding"/>
    <property type="evidence" value="ECO:0007669"/>
    <property type="project" value="UniProtKB-UniRule"/>
</dbReference>
<dbReference type="GO" id="GO:0004845">
    <property type="term" value="F:uracil phosphoribosyltransferase activity"/>
    <property type="evidence" value="ECO:0007669"/>
    <property type="project" value="UniProtKB-UniRule"/>
</dbReference>
<dbReference type="GO" id="GO:0044206">
    <property type="term" value="P:UMP salvage"/>
    <property type="evidence" value="ECO:0007669"/>
    <property type="project" value="UniProtKB-UniRule"/>
</dbReference>
<dbReference type="GO" id="GO:0006223">
    <property type="term" value="P:uracil salvage"/>
    <property type="evidence" value="ECO:0007669"/>
    <property type="project" value="InterPro"/>
</dbReference>
<dbReference type="CDD" id="cd06223">
    <property type="entry name" value="PRTases_typeI"/>
    <property type="match status" value="1"/>
</dbReference>
<dbReference type="FunFam" id="3.40.50.2020:FF:000003">
    <property type="entry name" value="Uracil phosphoribosyltransferase"/>
    <property type="match status" value="1"/>
</dbReference>
<dbReference type="Gene3D" id="3.40.50.2020">
    <property type="match status" value="1"/>
</dbReference>
<dbReference type="HAMAP" id="MF_01218_B">
    <property type="entry name" value="Upp_B"/>
    <property type="match status" value="1"/>
</dbReference>
<dbReference type="InterPro" id="IPR000836">
    <property type="entry name" value="PRibTrfase_dom"/>
</dbReference>
<dbReference type="InterPro" id="IPR029057">
    <property type="entry name" value="PRTase-like"/>
</dbReference>
<dbReference type="InterPro" id="IPR034332">
    <property type="entry name" value="Upp_B"/>
</dbReference>
<dbReference type="InterPro" id="IPR050054">
    <property type="entry name" value="UPRTase/APRTase"/>
</dbReference>
<dbReference type="InterPro" id="IPR005765">
    <property type="entry name" value="Ura_phspho_trans"/>
</dbReference>
<dbReference type="NCBIfam" id="NF001097">
    <property type="entry name" value="PRK00129.1"/>
    <property type="match status" value="1"/>
</dbReference>
<dbReference type="NCBIfam" id="TIGR01091">
    <property type="entry name" value="upp"/>
    <property type="match status" value="1"/>
</dbReference>
<dbReference type="PANTHER" id="PTHR32315">
    <property type="entry name" value="ADENINE PHOSPHORIBOSYLTRANSFERASE"/>
    <property type="match status" value="1"/>
</dbReference>
<dbReference type="PANTHER" id="PTHR32315:SF4">
    <property type="entry name" value="URACIL PHOSPHORIBOSYLTRANSFERASE, CHLOROPLASTIC"/>
    <property type="match status" value="1"/>
</dbReference>
<dbReference type="Pfam" id="PF14681">
    <property type="entry name" value="UPRTase"/>
    <property type="match status" value="1"/>
</dbReference>
<dbReference type="SUPFAM" id="SSF53271">
    <property type="entry name" value="PRTase-like"/>
    <property type="match status" value="1"/>
</dbReference>
<keyword id="KW-0021">Allosteric enzyme</keyword>
<keyword id="KW-0328">Glycosyltransferase</keyword>
<keyword id="KW-0342">GTP-binding</keyword>
<keyword id="KW-0460">Magnesium</keyword>
<keyword id="KW-0547">Nucleotide-binding</keyword>
<keyword id="KW-0808">Transferase</keyword>
<feature type="chain" id="PRO_1000164833" description="Uracil phosphoribosyltransferase">
    <location>
        <begin position="1"/>
        <end position="208"/>
    </location>
</feature>
<feature type="binding site" evidence="1">
    <location>
        <position position="78"/>
    </location>
    <ligand>
        <name>5-phospho-alpha-D-ribose 1-diphosphate</name>
        <dbReference type="ChEBI" id="CHEBI:58017"/>
    </ligand>
</feature>
<feature type="binding site" evidence="1">
    <location>
        <position position="103"/>
    </location>
    <ligand>
        <name>5-phospho-alpha-D-ribose 1-diphosphate</name>
        <dbReference type="ChEBI" id="CHEBI:58017"/>
    </ligand>
</feature>
<feature type="binding site" evidence="1">
    <location>
        <begin position="130"/>
        <end position="138"/>
    </location>
    <ligand>
        <name>5-phospho-alpha-D-ribose 1-diphosphate</name>
        <dbReference type="ChEBI" id="CHEBI:58017"/>
    </ligand>
</feature>
<feature type="binding site" evidence="1">
    <location>
        <position position="193"/>
    </location>
    <ligand>
        <name>uracil</name>
        <dbReference type="ChEBI" id="CHEBI:17568"/>
    </ligand>
</feature>
<feature type="binding site" evidence="1">
    <location>
        <begin position="198"/>
        <end position="200"/>
    </location>
    <ligand>
        <name>uracil</name>
        <dbReference type="ChEBI" id="CHEBI:17568"/>
    </ligand>
</feature>
<feature type="binding site" evidence="1">
    <location>
        <position position="199"/>
    </location>
    <ligand>
        <name>5-phospho-alpha-D-ribose 1-diphosphate</name>
        <dbReference type="ChEBI" id="CHEBI:58017"/>
    </ligand>
</feature>
<reference key="1">
    <citation type="journal article" date="2009" name="PLoS ONE">
        <title>Salmonella paratyphi C: genetic divergence from Salmonella choleraesuis and pathogenic convergence with Salmonella typhi.</title>
        <authorList>
            <person name="Liu W.-Q."/>
            <person name="Feng Y."/>
            <person name="Wang Y."/>
            <person name="Zou Q.-H."/>
            <person name="Chen F."/>
            <person name="Guo J.-T."/>
            <person name="Peng Y.-H."/>
            <person name="Jin Y."/>
            <person name="Li Y.-G."/>
            <person name="Hu S.-N."/>
            <person name="Johnston R.N."/>
            <person name="Liu G.-R."/>
            <person name="Liu S.-L."/>
        </authorList>
    </citation>
    <scope>NUCLEOTIDE SEQUENCE [LARGE SCALE GENOMIC DNA]</scope>
    <source>
        <strain>RKS4594</strain>
    </source>
</reference>
<proteinExistence type="inferred from homology"/>
<accession>C0PYQ8</accession>
<name>UPP_SALPC</name>
<comment type="function">
    <text evidence="1">Catalyzes the conversion of uracil and 5-phospho-alpha-D-ribose 1-diphosphate (PRPP) to UMP and diphosphate.</text>
</comment>
<comment type="catalytic activity">
    <reaction evidence="1">
        <text>UMP + diphosphate = 5-phospho-alpha-D-ribose 1-diphosphate + uracil</text>
        <dbReference type="Rhea" id="RHEA:13017"/>
        <dbReference type="ChEBI" id="CHEBI:17568"/>
        <dbReference type="ChEBI" id="CHEBI:33019"/>
        <dbReference type="ChEBI" id="CHEBI:57865"/>
        <dbReference type="ChEBI" id="CHEBI:58017"/>
        <dbReference type="EC" id="2.4.2.9"/>
    </reaction>
</comment>
<comment type="cofactor">
    <cofactor evidence="1">
        <name>Mg(2+)</name>
        <dbReference type="ChEBI" id="CHEBI:18420"/>
    </cofactor>
    <text evidence="1">Binds 1 Mg(2+) ion per subunit. The magnesium is bound as Mg-PRPP.</text>
</comment>
<comment type="activity regulation">
    <text evidence="1">Allosterically activated by GTP.</text>
</comment>
<comment type="pathway">
    <text evidence="1">Pyrimidine metabolism; UMP biosynthesis via salvage pathway; UMP from uracil: step 1/1.</text>
</comment>
<comment type="similarity">
    <text evidence="1">Belongs to the UPRTase family.</text>
</comment>
<sequence length="208" mass="22533">MKIVEVKHPLVKHKLGLMRENDISTKRFRELASEVGSLLTYEATADLETEKVTIEGWNGPVEIDQIKGKKITVVPILRAGLGMMEGVLENVPSARISVVGMYRNEETLEPVPYFQKLVSNIDERMALIVDPMLATGGSVIATIDLLKKAGCSSIKVLVLVAAPEGIAALEKAHPDVELYTASIDQGLNEHGYIIPGLGDAGDKIFGTK</sequence>